<evidence type="ECO:0000250" key="1">
    <source>
        <dbReference type="UniProtKB" id="P24230"/>
    </source>
</evidence>
<evidence type="ECO:0000250" key="2">
    <source>
        <dbReference type="UniProtKB" id="Q9WY48"/>
    </source>
</evidence>
<evidence type="ECO:0000255" key="3">
    <source>
        <dbReference type="PROSITE-ProRule" id="PRU00541"/>
    </source>
</evidence>
<evidence type="ECO:0000255" key="4">
    <source>
        <dbReference type="PROSITE-ProRule" id="PRU00542"/>
    </source>
</evidence>
<evidence type="ECO:0000305" key="5"/>
<feature type="chain" id="PRO_0000102148" description="ATP-dependent DNA helicase RecG">
    <location>
        <begin position="1"/>
        <end position="693"/>
    </location>
</feature>
<feature type="domain" description="Helicase ATP-binding" evidence="3">
    <location>
        <begin position="283"/>
        <end position="448"/>
    </location>
</feature>
<feature type="domain" description="Helicase C-terminal" evidence="4">
    <location>
        <begin position="482"/>
        <end position="628"/>
    </location>
</feature>
<feature type="region of interest" description="Wedge domain" evidence="2">
    <location>
        <begin position="48"/>
        <end position="146"/>
    </location>
</feature>
<feature type="short sequence motif" description="DEAH box" evidence="3">
    <location>
        <begin position="397"/>
        <end position="400"/>
    </location>
</feature>
<feature type="binding site" evidence="3">
    <location>
        <begin position="296"/>
        <end position="303"/>
    </location>
    <ligand>
        <name>ATP</name>
        <dbReference type="ChEBI" id="CHEBI:30616"/>
    </ligand>
</feature>
<dbReference type="EC" id="5.6.2.4" evidence="1"/>
<dbReference type="EMBL" id="AE004439">
    <property type="protein sequence ID" value="AAK03003.1"/>
    <property type="molecule type" value="Genomic_DNA"/>
</dbReference>
<dbReference type="RefSeq" id="WP_010906918.1">
    <property type="nucleotide sequence ID" value="NC_002663.1"/>
</dbReference>
<dbReference type="SMR" id="Q9CMB4"/>
<dbReference type="STRING" id="272843.PM0919"/>
<dbReference type="EnsemblBacteria" id="AAK03003">
    <property type="protein sequence ID" value="AAK03003"/>
    <property type="gene ID" value="PM0919"/>
</dbReference>
<dbReference type="KEGG" id="pmu:PM0919"/>
<dbReference type="PATRIC" id="fig|272843.6.peg.929"/>
<dbReference type="HOGENOM" id="CLU_005122_7_1_6"/>
<dbReference type="OrthoDB" id="9804325at2"/>
<dbReference type="Proteomes" id="UP000000809">
    <property type="component" value="Chromosome"/>
</dbReference>
<dbReference type="GO" id="GO:0005524">
    <property type="term" value="F:ATP binding"/>
    <property type="evidence" value="ECO:0007669"/>
    <property type="project" value="UniProtKB-KW"/>
</dbReference>
<dbReference type="GO" id="GO:0016887">
    <property type="term" value="F:ATP hydrolysis activity"/>
    <property type="evidence" value="ECO:0007669"/>
    <property type="project" value="RHEA"/>
</dbReference>
<dbReference type="GO" id="GO:0003677">
    <property type="term" value="F:DNA binding"/>
    <property type="evidence" value="ECO:0007669"/>
    <property type="project" value="UniProtKB-KW"/>
</dbReference>
<dbReference type="GO" id="GO:0003678">
    <property type="term" value="F:DNA helicase activity"/>
    <property type="evidence" value="ECO:0007669"/>
    <property type="project" value="InterPro"/>
</dbReference>
<dbReference type="GO" id="GO:0006310">
    <property type="term" value="P:DNA recombination"/>
    <property type="evidence" value="ECO:0007669"/>
    <property type="project" value="UniProtKB-KW"/>
</dbReference>
<dbReference type="GO" id="GO:0006281">
    <property type="term" value="P:DNA repair"/>
    <property type="evidence" value="ECO:0007669"/>
    <property type="project" value="UniProtKB-KW"/>
</dbReference>
<dbReference type="CDD" id="cd17992">
    <property type="entry name" value="DEXHc_RecG"/>
    <property type="match status" value="1"/>
</dbReference>
<dbReference type="CDD" id="cd04488">
    <property type="entry name" value="RecG_wedge_OBF"/>
    <property type="match status" value="1"/>
</dbReference>
<dbReference type="FunFam" id="2.40.50.140:FF:000134">
    <property type="entry name" value="ATP-dependent DNA helicase RecG"/>
    <property type="match status" value="1"/>
</dbReference>
<dbReference type="FunFam" id="3.40.50.300:FF:000391">
    <property type="entry name" value="ATP-dependent DNA helicase RecG"/>
    <property type="match status" value="1"/>
</dbReference>
<dbReference type="Gene3D" id="2.40.50.140">
    <property type="entry name" value="Nucleic acid-binding proteins"/>
    <property type="match status" value="1"/>
</dbReference>
<dbReference type="Gene3D" id="3.40.50.300">
    <property type="entry name" value="P-loop containing nucleotide triphosphate hydrolases"/>
    <property type="match status" value="2"/>
</dbReference>
<dbReference type="InterPro" id="IPR004609">
    <property type="entry name" value="ATP-dep_DNA_helicase_RecG"/>
</dbReference>
<dbReference type="InterPro" id="IPR011545">
    <property type="entry name" value="DEAD/DEAH_box_helicase_dom"/>
</dbReference>
<dbReference type="InterPro" id="IPR014001">
    <property type="entry name" value="Helicase_ATP-bd"/>
</dbReference>
<dbReference type="InterPro" id="IPR001650">
    <property type="entry name" value="Helicase_C-like"/>
</dbReference>
<dbReference type="InterPro" id="IPR012340">
    <property type="entry name" value="NA-bd_OB-fold"/>
</dbReference>
<dbReference type="InterPro" id="IPR027417">
    <property type="entry name" value="P-loop_NTPase"/>
</dbReference>
<dbReference type="InterPro" id="IPR047112">
    <property type="entry name" value="RecG/Mfd"/>
</dbReference>
<dbReference type="InterPro" id="IPR045562">
    <property type="entry name" value="RecG_dom3_C"/>
</dbReference>
<dbReference type="InterPro" id="IPR033454">
    <property type="entry name" value="RecG_wedge"/>
</dbReference>
<dbReference type="NCBIfam" id="NF008163">
    <property type="entry name" value="PRK10917.1-1"/>
    <property type="match status" value="1"/>
</dbReference>
<dbReference type="NCBIfam" id="NF008165">
    <property type="entry name" value="PRK10917.1-3"/>
    <property type="match status" value="1"/>
</dbReference>
<dbReference type="NCBIfam" id="NF008166">
    <property type="entry name" value="PRK10917.1-4"/>
    <property type="match status" value="1"/>
</dbReference>
<dbReference type="NCBIfam" id="NF008168">
    <property type="entry name" value="PRK10917.2-2"/>
    <property type="match status" value="1"/>
</dbReference>
<dbReference type="NCBIfam" id="TIGR00643">
    <property type="entry name" value="recG"/>
    <property type="match status" value="1"/>
</dbReference>
<dbReference type="PANTHER" id="PTHR47964">
    <property type="entry name" value="ATP-DEPENDENT DNA HELICASE HOMOLOG RECG, CHLOROPLASTIC"/>
    <property type="match status" value="1"/>
</dbReference>
<dbReference type="PANTHER" id="PTHR47964:SF1">
    <property type="entry name" value="ATP-DEPENDENT DNA HELICASE HOMOLOG RECG, CHLOROPLASTIC"/>
    <property type="match status" value="1"/>
</dbReference>
<dbReference type="Pfam" id="PF00270">
    <property type="entry name" value="DEAD"/>
    <property type="match status" value="1"/>
</dbReference>
<dbReference type="Pfam" id="PF00271">
    <property type="entry name" value="Helicase_C"/>
    <property type="match status" value="1"/>
</dbReference>
<dbReference type="Pfam" id="PF19833">
    <property type="entry name" value="RecG_dom3_C"/>
    <property type="match status" value="1"/>
</dbReference>
<dbReference type="Pfam" id="PF17191">
    <property type="entry name" value="RecG_wedge"/>
    <property type="match status" value="1"/>
</dbReference>
<dbReference type="SMART" id="SM00487">
    <property type="entry name" value="DEXDc"/>
    <property type="match status" value="1"/>
</dbReference>
<dbReference type="SMART" id="SM00490">
    <property type="entry name" value="HELICc"/>
    <property type="match status" value="1"/>
</dbReference>
<dbReference type="SUPFAM" id="SSF50249">
    <property type="entry name" value="Nucleic acid-binding proteins"/>
    <property type="match status" value="1"/>
</dbReference>
<dbReference type="SUPFAM" id="SSF52540">
    <property type="entry name" value="P-loop containing nucleoside triphosphate hydrolases"/>
    <property type="match status" value="2"/>
</dbReference>
<dbReference type="PROSITE" id="PS51192">
    <property type="entry name" value="HELICASE_ATP_BIND_1"/>
    <property type="match status" value="1"/>
</dbReference>
<dbReference type="PROSITE" id="PS51194">
    <property type="entry name" value="HELICASE_CTER"/>
    <property type="match status" value="1"/>
</dbReference>
<gene>
    <name type="primary">recG</name>
    <name type="ordered locus">PM0919</name>
</gene>
<proteinExistence type="inferred from homology"/>
<reference key="1">
    <citation type="journal article" date="2001" name="Proc. Natl. Acad. Sci. U.S.A.">
        <title>Complete genomic sequence of Pasteurella multocida Pm70.</title>
        <authorList>
            <person name="May B.J."/>
            <person name="Zhang Q."/>
            <person name="Li L.L."/>
            <person name="Paustian M.L."/>
            <person name="Whittam T.S."/>
            <person name="Kapur V."/>
        </authorList>
    </citation>
    <scope>NUCLEOTIDE SEQUENCE [LARGE SCALE GENOMIC DNA]</scope>
    <source>
        <strain>Pm70</strain>
    </source>
</reference>
<keyword id="KW-0067">ATP-binding</keyword>
<keyword id="KW-0227">DNA damage</keyword>
<keyword id="KW-0233">DNA recombination</keyword>
<keyword id="KW-0234">DNA repair</keyword>
<keyword id="KW-0238">DNA-binding</keyword>
<keyword id="KW-0347">Helicase</keyword>
<keyword id="KW-0378">Hydrolase</keyword>
<keyword id="KW-0413">Isomerase</keyword>
<keyword id="KW-0547">Nucleotide-binding</keyword>
<keyword id="KW-1185">Reference proteome</keyword>
<sequence>MTIQFLDAVPLTTLSGVGAAISDKLGRIGIHNLQDLLFHLPIRYEDRTRITPIHDLRPDAYATIEGLVQTCEVQFGKRPILNVSLSDGTSKIMLRFFNFNAGMKNSLQPGARVKAFGEVKRGRFMAEIHHPEYQIIRDNAPLILEETLTPIYSTTEGIKQNSLRKLTDQALAVLENIQIAEILPNEFNPHPFSLKEAIRFLHRPPPDVSLEALEKGTHPAQQRLIFEELLAHNLAMQKVRIGTQQFSAYPLSYQTDLKQRFLAQLPFTPTDAQVRVTQEIEQDLTHPFPMMRLVQGDVGSGKTLVAALAALLAIDNGKQVALMAPTEILAEQHATNFRRWFESLGIEVGWLAGKVKGKARQTELEKIRTGQVQMVVGTHALFQDEVEFSDLALVIVDEQHRFGVHQRLMLREKGKQADHYPHQLIMTATPIPRTLAMTVYADLDTSIIDELPPGRTPITTVAISEERRAEVIARVNHACVNEKRQAYWVCTLIDESEVLEAQAAEAIAEDLRKILPHLRIGLVHGRMKPAEKQDIMQAFKQAEIDLLVATTVIEVGVDVPNASLMIIENAERLGLSQLHQLRGRVGRGTTASFCVLMYKPPLGKISQKRLQVLRDTQDGFVISEKDLEIRGPGEVLGTKQTGVAEFKVANLMRDRKMIPTVQYYARRLIVEQPEVATKLIQRWINQREIYTHV</sequence>
<organism>
    <name type="scientific">Pasteurella multocida (strain Pm70)</name>
    <dbReference type="NCBI Taxonomy" id="272843"/>
    <lineage>
        <taxon>Bacteria</taxon>
        <taxon>Pseudomonadati</taxon>
        <taxon>Pseudomonadota</taxon>
        <taxon>Gammaproteobacteria</taxon>
        <taxon>Pasteurellales</taxon>
        <taxon>Pasteurellaceae</taxon>
        <taxon>Pasteurella</taxon>
    </lineage>
</organism>
<comment type="function">
    <text evidence="1">Plays a critical role in recombination and DNA repair. Helps process Holliday junction intermediates to mature products by catalyzing branch migration. Has replication fork regression activity, unwinds stalled or blocked replication forks to make a HJ that can be resolved. Has a DNA unwinding activity characteristic of a DNA helicase with 3'-5' polarity (By similarity).</text>
</comment>
<comment type="catalytic activity">
    <reaction evidence="1">
        <text>Couples ATP hydrolysis with the unwinding of duplex DNA by translocating in the 3'-5' direction.</text>
        <dbReference type="EC" id="5.6.2.4"/>
    </reaction>
</comment>
<comment type="catalytic activity">
    <reaction evidence="1">
        <text>ATP + H2O = ADP + phosphate + H(+)</text>
        <dbReference type="Rhea" id="RHEA:13065"/>
        <dbReference type="ChEBI" id="CHEBI:15377"/>
        <dbReference type="ChEBI" id="CHEBI:15378"/>
        <dbReference type="ChEBI" id="CHEBI:30616"/>
        <dbReference type="ChEBI" id="CHEBI:43474"/>
        <dbReference type="ChEBI" id="CHEBI:456216"/>
        <dbReference type="EC" id="5.6.2.4"/>
    </reaction>
</comment>
<comment type="subunit">
    <text evidence="2">Monomer (By similarity).</text>
</comment>
<comment type="domain">
    <text evidence="2">The wedge domain within the N-terminus inserts into the replication fork junction, where the lagging and leading strand split (By similarity).</text>
</comment>
<comment type="similarity">
    <text evidence="5">Belongs to the helicase family. RecG subfamily.</text>
</comment>
<accession>Q9CMB4</accession>
<protein>
    <recommendedName>
        <fullName>ATP-dependent DNA helicase RecG</fullName>
        <ecNumber evidence="1">5.6.2.4</ecNumber>
    </recommendedName>
    <alternativeName>
        <fullName>DNA branch migration protein RecG</fullName>
    </alternativeName>
    <alternativeName>
        <fullName>Probable DNA 3'-5' helicase RecG</fullName>
    </alternativeName>
</protein>
<name>RECG_PASMU</name>